<accession>O77016</accession>
<accession>O77017</accession>
<gene>
    <name type="primary">Amyrel</name>
</gene>
<dbReference type="EC" id="3.2.1.1" evidence="2"/>
<dbReference type="EMBL" id="U96159">
    <property type="protein sequence ID" value="AAC39109.4"/>
    <property type="molecule type" value="Genomic_DNA"/>
</dbReference>
<dbReference type="EMBL" id="U96160">
    <property type="protein sequence ID" value="AAC39110.2"/>
    <property type="molecule type" value="Genomic_DNA"/>
</dbReference>
<dbReference type="SMR" id="O77016"/>
<dbReference type="CAZy" id="GH13">
    <property type="family name" value="Glycoside Hydrolase Family 13"/>
</dbReference>
<dbReference type="OrthoDB" id="550577at2759"/>
<dbReference type="GO" id="GO:0005576">
    <property type="term" value="C:extracellular region"/>
    <property type="evidence" value="ECO:0007669"/>
    <property type="project" value="UniProtKB-SubCell"/>
</dbReference>
<dbReference type="GO" id="GO:0004134">
    <property type="term" value="F:4-alpha-glucanotransferase activity"/>
    <property type="evidence" value="ECO:0007669"/>
    <property type="project" value="EnsemblMetazoa"/>
</dbReference>
<dbReference type="GO" id="GO:0004556">
    <property type="term" value="F:alpha-amylase activity"/>
    <property type="evidence" value="ECO:0007669"/>
    <property type="project" value="UniProtKB-EC"/>
</dbReference>
<dbReference type="GO" id="GO:0046872">
    <property type="term" value="F:metal ion binding"/>
    <property type="evidence" value="ECO:0007669"/>
    <property type="project" value="UniProtKB-KW"/>
</dbReference>
<dbReference type="GO" id="GO:0005975">
    <property type="term" value="P:carbohydrate metabolic process"/>
    <property type="evidence" value="ECO:0007669"/>
    <property type="project" value="InterPro"/>
</dbReference>
<dbReference type="CDD" id="cd11317">
    <property type="entry name" value="AmyAc_bac_euk_AmyA"/>
    <property type="match status" value="1"/>
</dbReference>
<dbReference type="FunFam" id="3.20.20.80:FF:000119">
    <property type="entry name" value="Alpha-amylase-related protein"/>
    <property type="match status" value="1"/>
</dbReference>
<dbReference type="FunFam" id="2.60.40.1180:FF:000020">
    <property type="entry name" value="Pancreatic alpha-amylase"/>
    <property type="match status" value="1"/>
</dbReference>
<dbReference type="Gene3D" id="3.20.20.80">
    <property type="entry name" value="Glycosidases"/>
    <property type="match status" value="1"/>
</dbReference>
<dbReference type="Gene3D" id="2.60.40.1180">
    <property type="entry name" value="Golgi alpha-mannosidase II"/>
    <property type="match status" value="1"/>
</dbReference>
<dbReference type="InterPro" id="IPR006048">
    <property type="entry name" value="A-amylase/branching_C"/>
</dbReference>
<dbReference type="InterPro" id="IPR031319">
    <property type="entry name" value="A-amylase_C"/>
</dbReference>
<dbReference type="InterPro" id="IPR006046">
    <property type="entry name" value="Alpha_amylase"/>
</dbReference>
<dbReference type="InterPro" id="IPR006047">
    <property type="entry name" value="Glyco_hydro_13_cat_dom"/>
</dbReference>
<dbReference type="InterPro" id="IPR013780">
    <property type="entry name" value="Glyco_hydro_b"/>
</dbReference>
<dbReference type="InterPro" id="IPR017853">
    <property type="entry name" value="Glycoside_hydrolase_SF"/>
</dbReference>
<dbReference type="PANTHER" id="PTHR43447">
    <property type="entry name" value="ALPHA-AMYLASE"/>
    <property type="match status" value="1"/>
</dbReference>
<dbReference type="Pfam" id="PF00128">
    <property type="entry name" value="Alpha-amylase"/>
    <property type="match status" value="1"/>
</dbReference>
<dbReference type="Pfam" id="PF02806">
    <property type="entry name" value="Alpha-amylase_C"/>
    <property type="match status" value="1"/>
</dbReference>
<dbReference type="PRINTS" id="PR00110">
    <property type="entry name" value="ALPHAAMYLASE"/>
</dbReference>
<dbReference type="SMART" id="SM00642">
    <property type="entry name" value="Aamy"/>
    <property type="match status" value="1"/>
</dbReference>
<dbReference type="SMART" id="SM00632">
    <property type="entry name" value="Aamy_C"/>
    <property type="match status" value="1"/>
</dbReference>
<dbReference type="SUPFAM" id="SSF51445">
    <property type="entry name" value="(Trans)glycosidases"/>
    <property type="match status" value="1"/>
</dbReference>
<dbReference type="SUPFAM" id="SSF51011">
    <property type="entry name" value="Glycosyl hydrolase domain"/>
    <property type="match status" value="1"/>
</dbReference>
<protein>
    <recommendedName>
        <fullName>Alpha-amylase-related protein</fullName>
        <ecNumber evidence="2">3.2.1.1</ecNumber>
    </recommendedName>
</protein>
<keyword id="KW-0106">Calcium</keyword>
<keyword id="KW-0119">Carbohydrate metabolism</keyword>
<keyword id="KW-0868">Chloride</keyword>
<keyword id="KW-1015">Disulfide bond</keyword>
<keyword id="KW-0326">Glycosidase</keyword>
<keyword id="KW-0378">Hydrolase</keyword>
<keyword id="KW-0479">Metal-binding</keyword>
<keyword id="KW-0873">Pyrrolidone carboxylic acid</keyword>
<keyword id="KW-0964">Secreted</keyword>
<keyword id="KW-0732">Signal</keyword>
<feature type="signal peptide" evidence="1">
    <location>
        <begin position="1"/>
        <end position="19"/>
    </location>
</feature>
<feature type="chain" id="PRO_0000001387" description="Alpha-amylase-related protein">
    <location>
        <begin position="20"/>
        <end position="493"/>
    </location>
</feature>
<feature type="active site" description="Nucleophile" evidence="2">
    <location>
        <position position="207"/>
    </location>
</feature>
<feature type="active site" description="Proton donor" evidence="2">
    <location>
        <position position="244"/>
    </location>
</feature>
<feature type="binding site" evidence="3">
    <location>
        <position position="117"/>
    </location>
    <ligand>
        <name>Ca(2+)</name>
        <dbReference type="ChEBI" id="CHEBI:29108"/>
    </ligand>
</feature>
<feature type="binding site" evidence="3">
    <location>
        <position position="168"/>
    </location>
    <ligand>
        <name>Ca(2+)</name>
        <dbReference type="ChEBI" id="CHEBI:29108"/>
    </ligand>
</feature>
<feature type="binding site" evidence="3">
    <location>
        <position position="177"/>
    </location>
    <ligand>
        <name>Ca(2+)</name>
        <dbReference type="ChEBI" id="CHEBI:29108"/>
    </ligand>
</feature>
<feature type="binding site" evidence="3">
    <location>
        <position position="205"/>
    </location>
    <ligand>
        <name>chloride</name>
        <dbReference type="ChEBI" id="CHEBI:17996"/>
    </ligand>
</feature>
<feature type="binding site" evidence="3">
    <location>
        <position position="211"/>
    </location>
    <ligand>
        <name>Ca(2+)</name>
        <dbReference type="ChEBI" id="CHEBI:29108"/>
    </ligand>
</feature>
<feature type="binding site" evidence="3">
    <location>
        <position position="307"/>
    </location>
    <ligand>
        <name>chloride</name>
        <dbReference type="ChEBI" id="CHEBI:17996"/>
    </ligand>
</feature>
<feature type="binding site" evidence="3">
    <location>
        <position position="342"/>
    </location>
    <ligand>
        <name>chloride</name>
        <dbReference type="ChEBI" id="CHEBI:17996"/>
    </ligand>
</feature>
<feature type="site" description="Transition state stabilizer" evidence="2">
    <location>
        <position position="309"/>
    </location>
</feature>
<feature type="modified residue" description="Pyrrolidone carboxylic acid" evidence="1">
    <location>
        <position position="20"/>
    </location>
</feature>
<feature type="disulfide bond" evidence="3">
    <location>
        <begin position="47"/>
        <end position="103"/>
    </location>
</feature>
<feature type="disulfide bond" evidence="3">
    <location>
        <begin position="156"/>
        <end position="170"/>
    </location>
</feature>
<feature type="disulfide bond" evidence="3">
    <location>
        <begin position="375"/>
        <end position="381"/>
    </location>
</feature>
<feature type="disulfide bond" evidence="4">
    <location>
        <begin position="417"/>
        <end position="440"/>
    </location>
</feature>
<feature type="disulfide bond" evidence="3">
    <location>
        <begin position="447"/>
        <end position="459"/>
    </location>
</feature>
<feature type="sequence variant" description="In strain: Isolate SIM2.">
    <original>F</original>
    <variation>L</variation>
    <location>
        <position position="50"/>
    </location>
</feature>
<feature type="sequence variant" description="In strain: Isolate SIM2.">
    <original>K</original>
    <variation>R</variation>
    <location>
        <position position="324"/>
    </location>
</feature>
<sequence length="493" mass="55551">MFKFALTLTLCLAGSLSLAQHNPHWWGNRNTIVHLFEWKWSDIAQECESFLGPRGFAGVQVSPVNENIISAGRPWWERYQPISYKLTTRSGNEEEFGDMVRRCNDVGVRIYVDVLLNHMSGDFDGVAVGTAGTEAEPRKKSFPGVPYTAQDFHPTCEITDWNDRFQVQQCELVGLKDLDQSSDWVRSKLIEFLDHLIELGVAGFRVDAAKHMASEDLEYIYSSLSNLNIDHGFPHNSRPFIFQEVIDHGHETVSRDEYKELGAVTEFRFSEEIGNAFRGNNALKWLQSWGTGWGFLPSGQALTFVDNHDNQRDAGAVLNYKSPKQYKMATAFHLAYPYGISRVMSSFAFDDHDTPPPQDAQERIISPEFDEDGACVNGWICEHRWRQIYAMVGFKNAVRDTEITGWWDNGDNQISFCRGNKGFLAINNNQYDLSQDLNTCLPTGTYCDVISGSLIDGSCTGKSVTVNENGYGYIHIGSDDFDGVLALHVDAKV</sequence>
<evidence type="ECO:0000250" key="1"/>
<evidence type="ECO:0000250" key="2">
    <source>
        <dbReference type="UniProtKB" id="P04746"/>
    </source>
</evidence>
<evidence type="ECO:0000250" key="3">
    <source>
        <dbReference type="UniProtKB" id="P56634"/>
    </source>
</evidence>
<evidence type="ECO:0000255" key="4"/>
<evidence type="ECO:0000305" key="5"/>
<proteinExistence type="inferred from homology"/>
<organism>
    <name type="scientific">Drosophila simulans</name>
    <name type="common">Fruit fly</name>
    <dbReference type="NCBI Taxonomy" id="7240"/>
    <lineage>
        <taxon>Eukaryota</taxon>
        <taxon>Metazoa</taxon>
        <taxon>Ecdysozoa</taxon>
        <taxon>Arthropoda</taxon>
        <taxon>Hexapoda</taxon>
        <taxon>Insecta</taxon>
        <taxon>Pterygota</taxon>
        <taxon>Neoptera</taxon>
        <taxon>Endopterygota</taxon>
        <taxon>Diptera</taxon>
        <taxon>Brachycera</taxon>
        <taxon>Muscomorpha</taxon>
        <taxon>Ephydroidea</taxon>
        <taxon>Drosophilidae</taxon>
        <taxon>Drosophila</taxon>
        <taxon>Sophophora</taxon>
    </lineage>
</organism>
<comment type="catalytic activity">
    <reaction evidence="2">
        <text>Endohydrolysis of (1-&gt;4)-alpha-D-glucosidic linkages in polysaccharides containing three or more (1-&gt;4)-alpha-linked D-glucose units.</text>
        <dbReference type="EC" id="3.2.1.1"/>
    </reaction>
</comment>
<comment type="cofactor">
    <cofactor evidence="3">
        <name>Ca(2+)</name>
        <dbReference type="ChEBI" id="CHEBI:29108"/>
    </cofactor>
    <text evidence="3">Binds 1 Ca(2+) ion per subunit.</text>
</comment>
<comment type="cofactor">
    <cofactor evidence="3">
        <name>chloride</name>
        <dbReference type="ChEBI" id="CHEBI:17996"/>
    </cofactor>
    <text evidence="3">Binds 1 Cl(-) ion per subunit.</text>
</comment>
<comment type="subunit">
    <text evidence="1">Monomer.</text>
</comment>
<comment type="subcellular location">
    <subcellularLocation>
        <location evidence="5">Secreted</location>
    </subcellularLocation>
</comment>
<comment type="similarity">
    <text evidence="5">Belongs to the glycosyl hydrolase 13 family.</text>
</comment>
<name>AMYR_DROSI</name>
<reference key="1">
    <citation type="submission" date="2002-10" db="EMBL/GenBank/DDBJ databases">
        <authorList>
            <person name="Da Lage J.-L."/>
        </authorList>
    </citation>
    <scope>NUCLEOTIDE SEQUENCE [GENOMIC DNA] (CLONES SIM1/SIM92 AND SIM2)</scope>
</reference>